<organism>
    <name type="scientific">Arabidopsis thaliana</name>
    <name type="common">Mouse-ear cress</name>
    <dbReference type="NCBI Taxonomy" id="3702"/>
    <lineage>
        <taxon>Eukaryota</taxon>
        <taxon>Viridiplantae</taxon>
        <taxon>Streptophyta</taxon>
        <taxon>Embryophyta</taxon>
        <taxon>Tracheophyta</taxon>
        <taxon>Spermatophyta</taxon>
        <taxon>Magnoliopsida</taxon>
        <taxon>eudicotyledons</taxon>
        <taxon>Gunneridae</taxon>
        <taxon>Pentapetalae</taxon>
        <taxon>rosids</taxon>
        <taxon>malvids</taxon>
        <taxon>Brassicales</taxon>
        <taxon>Brassicaceae</taxon>
        <taxon>Camelineae</taxon>
        <taxon>Arabidopsis</taxon>
    </lineage>
</organism>
<keyword id="KW-0007">Acetylation</keyword>
<keyword id="KW-0025">Alternative splicing</keyword>
<keyword id="KW-0963">Cytoplasm</keyword>
<keyword id="KW-0539">Nucleus</keyword>
<keyword id="KW-0647">Proteasome</keyword>
<keyword id="KW-1185">Reference proteome</keyword>
<gene>
    <name type="primary">PBD2</name>
    <name type="synonym">PRCGA</name>
    <name type="ordered locus">At4g14800</name>
    <name type="ORF">dl3440w</name>
    <name type="ORF">FCAALL.135</name>
</gene>
<feature type="chain" id="PRO_0000148050" description="Proteasome subunit beta type-2-B">
    <location>
        <begin position="1"/>
        <end position="199"/>
    </location>
</feature>
<feature type="modified residue" description="N-acetylmethionine" evidence="5">
    <location>
        <position position="1"/>
    </location>
</feature>
<name>PSB2B_ARATH</name>
<sequence>MECVFGLVGNGFAIVAADTSAVHSILLHKNKEDKIMTLDSHKLVAASGEPGDRVQFTEYVQKNVSLYQFRNGIPLSTAAAANFTRGELATALRKNPYSVNILMAGYDKEAGASLYYIDYIATLHKVDKGAFGYGSYFSLSTMDRHYRSDMSVEEAIELVDKCILEIRSRLVIAPPNFVIKIVDKDGAREYGWRISTADA</sequence>
<protein>
    <recommendedName>
        <fullName>Proteasome subunit beta type-2-B</fullName>
    </recommendedName>
    <alternativeName>
        <fullName>20S proteasome beta subunit D-2</fullName>
    </alternativeName>
    <alternativeName>
        <fullName>Proteasome component GA</fullName>
    </alternativeName>
    <alternativeName>
        <fullName>Proteasome subunit beta type-4</fullName>
    </alternativeName>
</protein>
<reference key="1">
    <citation type="journal article" date="1997" name="FEBS Lett.">
        <title>The 20S proteasome gene family in Arabidopsis thaliana.</title>
        <authorList>
            <person name="Parmentier Y."/>
            <person name="Bouchez D."/>
            <person name="Fleck J."/>
            <person name="Genschik P."/>
        </authorList>
    </citation>
    <scope>NUCLEOTIDE SEQUENCE [MRNA]</scope>
    <source>
        <strain>cv. Columbia</strain>
    </source>
</reference>
<reference key="2">
    <citation type="journal article" date="1998" name="Genetics">
        <title>Molecular organization of the 20S proteasome gene family from Arabidopsis thaliana.</title>
        <authorList>
            <person name="Fu H."/>
            <person name="Doelling J.H."/>
            <person name="Arendt C.S."/>
            <person name="Hochstrasser M."/>
            <person name="Vierstra R.D."/>
        </authorList>
    </citation>
    <scope>NUCLEOTIDE SEQUENCE [MRNA]</scope>
    <scope>TISSUE SPECIFICITY</scope>
    <scope>GENE FAMILY</scope>
    <scope>NOMENCLATURE</scope>
    <source>
        <strain>cv. Columbia</strain>
    </source>
</reference>
<reference key="3">
    <citation type="journal article" date="1998" name="Nature">
        <title>Analysis of 1.9 Mb of contiguous sequence from chromosome 4 of Arabidopsis thaliana.</title>
        <authorList>
            <person name="Bevan M."/>
            <person name="Bancroft I."/>
            <person name="Bent E."/>
            <person name="Love K."/>
            <person name="Goodman H.M."/>
            <person name="Dean C."/>
            <person name="Bergkamp R."/>
            <person name="Dirkse W."/>
            <person name="van Staveren M."/>
            <person name="Stiekema W."/>
            <person name="Drost L."/>
            <person name="Ridley P."/>
            <person name="Hudson S.-A."/>
            <person name="Patel K."/>
            <person name="Murphy G."/>
            <person name="Piffanelli P."/>
            <person name="Wedler H."/>
            <person name="Wedler E."/>
            <person name="Wambutt R."/>
            <person name="Weitzenegger T."/>
            <person name="Pohl T."/>
            <person name="Terryn N."/>
            <person name="Gielen J."/>
            <person name="Villarroel R."/>
            <person name="De Clercq R."/>
            <person name="van Montagu M."/>
            <person name="Lecharny A."/>
            <person name="Aubourg S."/>
            <person name="Gy I."/>
            <person name="Kreis M."/>
            <person name="Lao N."/>
            <person name="Kavanagh T."/>
            <person name="Hempel S."/>
            <person name="Kotter P."/>
            <person name="Entian K.-D."/>
            <person name="Rieger M."/>
            <person name="Schaefer M."/>
            <person name="Funk B."/>
            <person name="Mueller-Auer S."/>
            <person name="Silvey M."/>
            <person name="James R."/>
            <person name="Monfort A."/>
            <person name="Pons A."/>
            <person name="Puigdomenech P."/>
            <person name="Douka A."/>
            <person name="Voukelatou E."/>
            <person name="Milioni D."/>
            <person name="Hatzopoulos P."/>
            <person name="Piravandi E."/>
            <person name="Obermaier B."/>
            <person name="Hilbert H."/>
            <person name="Duesterhoeft A."/>
            <person name="Moores T."/>
            <person name="Jones J.D.G."/>
            <person name="Eneva T."/>
            <person name="Palme K."/>
            <person name="Benes V."/>
            <person name="Rechmann S."/>
            <person name="Ansorge W."/>
            <person name="Cooke R."/>
            <person name="Berger C."/>
            <person name="Delseny M."/>
            <person name="Voet M."/>
            <person name="Volckaert G."/>
            <person name="Mewes H.-W."/>
            <person name="Klosterman S."/>
            <person name="Schueller C."/>
            <person name="Chalwatzis N."/>
        </authorList>
    </citation>
    <scope>NUCLEOTIDE SEQUENCE [LARGE SCALE GENOMIC DNA]</scope>
    <source>
        <strain>cv. Columbia</strain>
    </source>
</reference>
<reference key="4">
    <citation type="journal article" date="1999" name="Nature">
        <title>Sequence and analysis of chromosome 4 of the plant Arabidopsis thaliana.</title>
        <authorList>
            <person name="Mayer K.F.X."/>
            <person name="Schueller C."/>
            <person name="Wambutt R."/>
            <person name="Murphy G."/>
            <person name="Volckaert G."/>
            <person name="Pohl T."/>
            <person name="Duesterhoeft A."/>
            <person name="Stiekema W."/>
            <person name="Entian K.-D."/>
            <person name="Terryn N."/>
            <person name="Harris B."/>
            <person name="Ansorge W."/>
            <person name="Brandt P."/>
            <person name="Grivell L.A."/>
            <person name="Rieger M."/>
            <person name="Weichselgartner M."/>
            <person name="de Simone V."/>
            <person name="Obermaier B."/>
            <person name="Mache R."/>
            <person name="Mueller M."/>
            <person name="Kreis M."/>
            <person name="Delseny M."/>
            <person name="Puigdomenech P."/>
            <person name="Watson M."/>
            <person name="Schmidtheini T."/>
            <person name="Reichert B."/>
            <person name="Portetelle D."/>
            <person name="Perez-Alonso M."/>
            <person name="Boutry M."/>
            <person name="Bancroft I."/>
            <person name="Vos P."/>
            <person name="Hoheisel J."/>
            <person name="Zimmermann W."/>
            <person name="Wedler H."/>
            <person name="Ridley P."/>
            <person name="Langham S.-A."/>
            <person name="McCullagh B."/>
            <person name="Bilham L."/>
            <person name="Robben J."/>
            <person name="van der Schueren J."/>
            <person name="Grymonprez B."/>
            <person name="Chuang Y.-J."/>
            <person name="Vandenbussche F."/>
            <person name="Braeken M."/>
            <person name="Weltjens I."/>
            <person name="Voet M."/>
            <person name="Bastiaens I."/>
            <person name="Aert R."/>
            <person name="Defoor E."/>
            <person name="Weitzenegger T."/>
            <person name="Bothe G."/>
            <person name="Ramsperger U."/>
            <person name="Hilbert H."/>
            <person name="Braun M."/>
            <person name="Holzer E."/>
            <person name="Brandt A."/>
            <person name="Peters S."/>
            <person name="van Staveren M."/>
            <person name="Dirkse W."/>
            <person name="Mooijman P."/>
            <person name="Klein Lankhorst R."/>
            <person name="Rose M."/>
            <person name="Hauf J."/>
            <person name="Koetter P."/>
            <person name="Berneiser S."/>
            <person name="Hempel S."/>
            <person name="Feldpausch M."/>
            <person name="Lamberth S."/>
            <person name="Van den Daele H."/>
            <person name="De Keyser A."/>
            <person name="Buysshaert C."/>
            <person name="Gielen J."/>
            <person name="Villarroel R."/>
            <person name="De Clercq R."/>
            <person name="van Montagu M."/>
            <person name="Rogers J."/>
            <person name="Cronin A."/>
            <person name="Quail M.A."/>
            <person name="Bray-Allen S."/>
            <person name="Clark L."/>
            <person name="Doggett J."/>
            <person name="Hall S."/>
            <person name="Kay M."/>
            <person name="Lennard N."/>
            <person name="McLay K."/>
            <person name="Mayes R."/>
            <person name="Pettett A."/>
            <person name="Rajandream M.A."/>
            <person name="Lyne M."/>
            <person name="Benes V."/>
            <person name="Rechmann S."/>
            <person name="Borkova D."/>
            <person name="Bloecker H."/>
            <person name="Scharfe M."/>
            <person name="Grimm M."/>
            <person name="Loehnert T.-H."/>
            <person name="Dose S."/>
            <person name="de Haan M."/>
            <person name="Maarse A.C."/>
            <person name="Schaefer M."/>
            <person name="Mueller-Auer S."/>
            <person name="Gabel C."/>
            <person name="Fuchs M."/>
            <person name="Fartmann B."/>
            <person name="Granderath K."/>
            <person name="Dauner D."/>
            <person name="Herzl A."/>
            <person name="Neumann S."/>
            <person name="Argiriou A."/>
            <person name="Vitale D."/>
            <person name="Liguori R."/>
            <person name="Piravandi E."/>
            <person name="Massenet O."/>
            <person name="Quigley F."/>
            <person name="Clabauld G."/>
            <person name="Muendlein A."/>
            <person name="Felber R."/>
            <person name="Schnabl S."/>
            <person name="Hiller R."/>
            <person name="Schmidt W."/>
            <person name="Lecharny A."/>
            <person name="Aubourg S."/>
            <person name="Chefdor F."/>
            <person name="Cooke R."/>
            <person name="Berger C."/>
            <person name="Monfort A."/>
            <person name="Casacuberta E."/>
            <person name="Gibbons T."/>
            <person name="Weber N."/>
            <person name="Vandenbol M."/>
            <person name="Bargues M."/>
            <person name="Terol J."/>
            <person name="Torres A."/>
            <person name="Perez-Perez A."/>
            <person name="Purnelle B."/>
            <person name="Bent E."/>
            <person name="Johnson S."/>
            <person name="Tacon D."/>
            <person name="Jesse T."/>
            <person name="Heijnen L."/>
            <person name="Schwarz S."/>
            <person name="Scholler P."/>
            <person name="Heber S."/>
            <person name="Francs P."/>
            <person name="Bielke C."/>
            <person name="Frishman D."/>
            <person name="Haase D."/>
            <person name="Lemcke K."/>
            <person name="Mewes H.-W."/>
            <person name="Stocker S."/>
            <person name="Zaccaria P."/>
            <person name="Bevan M."/>
            <person name="Wilson R.K."/>
            <person name="de la Bastide M."/>
            <person name="Habermann K."/>
            <person name="Parnell L."/>
            <person name="Dedhia N."/>
            <person name="Gnoj L."/>
            <person name="Schutz K."/>
            <person name="Huang E."/>
            <person name="Spiegel L."/>
            <person name="Sekhon M."/>
            <person name="Murray J."/>
            <person name="Sheet P."/>
            <person name="Cordes M."/>
            <person name="Abu-Threideh J."/>
            <person name="Stoneking T."/>
            <person name="Kalicki J."/>
            <person name="Graves T."/>
            <person name="Harmon G."/>
            <person name="Edwards J."/>
            <person name="Latreille P."/>
            <person name="Courtney L."/>
            <person name="Cloud J."/>
            <person name="Abbott A."/>
            <person name="Scott K."/>
            <person name="Johnson D."/>
            <person name="Minx P."/>
            <person name="Bentley D."/>
            <person name="Fulton B."/>
            <person name="Miller N."/>
            <person name="Greco T."/>
            <person name="Kemp K."/>
            <person name="Kramer J."/>
            <person name="Fulton L."/>
            <person name="Mardis E."/>
            <person name="Dante M."/>
            <person name="Pepin K."/>
            <person name="Hillier L.W."/>
            <person name="Nelson J."/>
            <person name="Spieth J."/>
            <person name="Ryan E."/>
            <person name="Andrews S."/>
            <person name="Geisel C."/>
            <person name="Layman D."/>
            <person name="Du H."/>
            <person name="Ali J."/>
            <person name="Berghoff A."/>
            <person name="Jones K."/>
            <person name="Drone K."/>
            <person name="Cotton M."/>
            <person name="Joshu C."/>
            <person name="Antonoiu B."/>
            <person name="Zidanic M."/>
            <person name="Strong C."/>
            <person name="Sun H."/>
            <person name="Lamar B."/>
            <person name="Yordan C."/>
            <person name="Ma P."/>
            <person name="Zhong J."/>
            <person name="Preston R."/>
            <person name="Vil D."/>
            <person name="Shekher M."/>
            <person name="Matero A."/>
            <person name="Shah R."/>
            <person name="Swaby I.K."/>
            <person name="O'Shaughnessy A."/>
            <person name="Rodriguez M."/>
            <person name="Hoffman J."/>
            <person name="Till S."/>
            <person name="Granat S."/>
            <person name="Shohdy N."/>
            <person name="Hasegawa A."/>
            <person name="Hameed A."/>
            <person name="Lodhi M."/>
            <person name="Johnson A."/>
            <person name="Chen E."/>
            <person name="Marra M.A."/>
            <person name="Martienssen R."/>
            <person name="McCombie W.R."/>
        </authorList>
    </citation>
    <scope>NUCLEOTIDE SEQUENCE [LARGE SCALE GENOMIC DNA]</scope>
    <source>
        <strain>cv. Columbia</strain>
    </source>
</reference>
<reference key="5">
    <citation type="journal article" date="2017" name="Plant J.">
        <title>Araport11: a complete reannotation of the Arabidopsis thaliana reference genome.</title>
        <authorList>
            <person name="Cheng C.Y."/>
            <person name="Krishnakumar V."/>
            <person name="Chan A.P."/>
            <person name="Thibaud-Nissen F."/>
            <person name="Schobel S."/>
            <person name="Town C.D."/>
        </authorList>
    </citation>
    <scope>GENOME REANNOTATION</scope>
    <source>
        <strain>cv. Columbia</strain>
    </source>
</reference>
<reference key="6">
    <citation type="submission" date="2006-02" db="EMBL/GenBank/DDBJ databases">
        <title>Arabidopsis ORF clones.</title>
        <authorList>
            <person name="Shinn P."/>
            <person name="Chen H."/>
            <person name="Kim C.J."/>
            <person name="Ecker J.R."/>
        </authorList>
    </citation>
    <scope>NUCLEOTIDE SEQUENCE [LARGE SCALE MRNA]</scope>
    <source>
        <strain>cv. Columbia</strain>
    </source>
</reference>
<reference key="7">
    <citation type="submission" date="2006-07" db="EMBL/GenBank/DDBJ databases">
        <title>Large-scale analysis of RIKEN Arabidopsis full-length (RAFL) cDNAs.</title>
        <authorList>
            <person name="Totoki Y."/>
            <person name="Seki M."/>
            <person name="Ishida J."/>
            <person name="Nakajima M."/>
            <person name="Enju A."/>
            <person name="Kamiya A."/>
            <person name="Narusaka M."/>
            <person name="Shin-i T."/>
            <person name="Nakagawa M."/>
            <person name="Sakamoto N."/>
            <person name="Oishi K."/>
            <person name="Kohara Y."/>
            <person name="Kobayashi M."/>
            <person name="Toyoda A."/>
            <person name="Sakaki Y."/>
            <person name="Sakurai T."/>
            <person name="Iida K."/>
            <person name="Akiyama K."/>
            <person name="Satou M."/>
            <person name="Toyoda T."/>
            <person name="Konagaya A."/>
            <person name="Carninci P."/>
            <person name="Kawai J."/>
            <person name="Hayashizaki Y."/>
            <person name="Shinozaki K."/>
        </authorList>
    </citation>
    <scope>NUCLEOTIDE SEQUENCE [LARGE SCALE MRNA]</scope>
    <source>
        <strain>cv. Columbia</strain>
    </source>
</reference>
<reference key="8">
    <citation type="submission" date="2002-03" db="EMBL/GenBank/DDBJ databases">
        <title>Full-length cDNA from Arabidopsis thaliana.</title>
        <authorList>
            <person name="Brover V.V."/>
            <person name="Troukhan M.E."/>
            <person name="Alexandrov N.A."/>
            <person name="Lu Y.-P."/>
            <person name="Flavell R.B."/>
            <person name="Feldmann K.A."/>
        </authorList>
    </citation>
    <scope>NUCLEOTIDE SEQUENCE [LARGE SCALE MRNA]</scope>
</reference>
<reference key="9">
    <citation type="journal article" date="1999" name="Mol. Biol. Rep.">
        <title>Structure and functional analyses of the 26S proteasome subunits from plants.</title>
        <authorList>
            <person name="Fu H."/>
            <person name="Girod P.-A."/>
            <person name="Doelling J.H."/>
            <person name="van Nocker S."/>
            <person name="Hochstrasser M."/>
            <person name="Finley D."/>
            <person name="Vierstra R.D."/>
        </authorList>
    </citation>
    <scope>SUBUNIT</scope>
</reference>
<reference key="10">
    <citation type="journal article" date="2004" name="J. Biol. Chem.">
        <title>Purification of the Arabidopsis 26 S proteasome: biochemical and molecular analyses revealed the presence of multiple isoforms.</title>
        <authorList>
            <person name="Yang P."/>
            <person name="Fu H."/>
            <person name="Walker J."/>
            <person name="Papa C.M."/>
            <person name="Smalle J."/>
            <person name="Ju Y.-M."/>
            <person name="Vierstra R.D."/>
        </authorList>
    </citation>
    <scope>SUBUNIT</scope>
    <scope>IDENTIFICATION BY MASS SPECTROMETRY</scope>
</reference>
<reference key="11">
    <citation type="journal article" date="2010" name="J. Biol. Chem.">
        <title>Affinity purification of the Arabidopsis 26 S proteasome reveals a diverse array of plant proteolytic complexes.</title>
        <authorList>
            <person name="Book A.J."/>
            <person name="Gladman N.P."/>
            <person name="Lee S.S."/>
            <person name="Scalf M."/>
            <person name="Smith L.M."/>
            <person name="Vierstra R.D."/>
        </authorList>
    </citation>
    <scope>IDENTIFICATION BY MASS SPECTROMETRY</scope>
    <scope>CHARACTERIZATION OF THE 26S PROTEASOME COMPLEX</scope>
    <scope>SUBUNIT</scope>
    <scope>ACETYLATION AT MET-1</scope>
</reference>
<dbReference type="EMBL" id="Y13175">
    <property type="protein sequence ID" value="CAA73618.1"/>
    <property type="molecule type" value="mRNA"/>
</dbReference>
<dbReference type="EMBL" id="AF043535">
    <property type="protein sequence ID" value="AAC32071.1"/>
    <property type="molecule type" value="mRNA"/>
</dbReference>
<dbReference type="EMBL" id="Z97337">
    <property type="protein sequence ID" value="CAB10259.1"/>
    <property type="molecule type" value="Genomic_DNA"/>
</dbReference>
<dbReference type="EMBL" id="AL161540">
    <property type="protein sequence ID" value="CAB78522.1"/>
    <property type="molecule type" value="Genomic_DNA"/>
</dbReference>
<dbReference type="EMBL" id="CP002687">
    <property type="protein sequence ID" value="AEE83500.1"/>
    <property type="molecule type" value="Genomic_DNA"/>
</dbReference>
<dbReference type="EMBL" id="BT024588">
    <property type="protein sequence ID" value="ABD42986.1"/>
    <property type="molecule type" value="mRNA"/>
</dbReference>
<dbReference type="EMBL" id="AK227835">
    <property type="protein sequence ID" value="BAE99813.1"/>
    <property type="molecule type" value="mRNA"/>
</dbReference>
<dbReference type="EMBL" id="AY086350">
    <property type="protein sequence ID" value="AAM64418.1"/>
    <property type="molecule type" value="mRNA"/>
</dbReference>
<dbReference type="PIR" id="A71411">
    <property type="entry name" value="A71411"/>
</dbReference>
<dbReference type="RefSeq" id="NP_193216.1">
    <molecule id="O24633-1"/>
    <property type="nucleotide sequence ID" value="NM_117565.4"/>
</dbReference>
<dbReference type="SMR" id="O24633"/>
<dbReference type="BioGRID" id="12432">
    <property type="interactions" value="53"/>
</dbReference>
<dbReference type="FunCoup" id="O24633">
    <property type="interactions" value="4201"/>
</dbReference>
<dbReference type="IntAct" id="O24633">
    <property type="interactions" value="1"/>
</dbReference>
<dbReference type="STRING" id="3702.O24633"/>
<dbReference type="MEROPS" id="T01.984"/>
<dbReference type="iPTMnet" id="O24633"/>
<dbReference type="PaxDb" id="3702-AT4G14800.2"/>
<dbReference type="ProteomicsDB" id="234943">
    <molecule id="O24633-1"/>
</dbReference>
<dbReference type="EnsemblPlants" id="AT4G14800.1">
    <molecule id="O24633-1"/>
    <property type="protein sequence ID" value="AT4G14800.1"/>
    <property type="gene ID" value="AT4G14800"/>
</dbReference>
<dbReference type="GeneID" id="827135"/>
<dbReference type="Gramene" id="AT4G14800.1">
    <molecule id="O24633-1"/>
    <property type="protein sequence ID" value="AT4G14800.1"/>
    <property type="gene ID" value="AT4G14800"/>
</dbReference>
<dbReference type="KEGG" id="ath:AT4G14800"/>
<dbReference type="Araport" id="AT4G14800"/>
<dbReference type="TAIR" id="AT4G14800">
    <property type="gene designation" value="PBD2"/>
</dbReference>
<dbReference type="eggNOG" id="KOG0177">
    <property type="taxonomic scope" value="Eukaryota"/>
</dbReference>
<dbReference type="HOGENOM" id="CLU_035750_12_1_1"/>
<dbReference type="InParanoid" id="O24633"/>
<dbReference type="OMA" id="MKRDHDK"/>
<dbReference type="OrthoDB" id="1030533at2759"/>
<dbReference type="PhylomeDB" id="O24633"/>
<dbReference type="PRO" id="PR:O24633"/>
<dbReference type="Proteomes" id="UP000006548">
    <property type="component" value="Chromosome 4"/>
</dbReference>
<dbReference type="ExpressionAtlas" id="O24633">
    <property type="expression patterns" value="baseline and differential"/>
</dbReference>
<dbReference type="GO" id="GO:0005737">
    <property type="term" value="C:cytoplasm"/>
    <property type="evidence" value="ECO:0007669"/>
    <property type="project" value="UniProtKB-SubCell"/>
</dbReference>
<dbReference type="GO" id="GO:0005634">
    <property type="term" value="C:nucleus"/>
    <property type="evidence" value="ECO:0007669"/>
    <property type="project" value="UniProtKB-SubCell"/>
</dbReference>
<dbReference type="GO" id="GO:0019774">
    <property type="term" value="C:proteasome core complex, beta-subunit complex"/>
    <property type="evidence" value="ECO:0000250"/>
    <property type="project" value="UniProtKB"/>
</dbReference>
<dbReference type="GO" id="GO:0010498">
    <property type="term" value="P:proteasomal protein catabolic process"/>
    <property type="evidence" value="ECO:0007669"/>
    <property type="project" value="InterPro"/>
</dbReference>
<dbReference type="CDD" id="cd03758">
    <property type="entry name" value="proteasome_beta_type_2"/>
    <property type="match status" value="1"/>
</dbReference>
<dbReference type="FunFam" id="3.60.20.10:FF:000008">
    <property type="entry name" value="Proteasome subunit beta type-4"/>
    <property type="match status" value="1"/>
</dbReference>
<dbReference type="Gene3D" id="3.60.20.10">
    <property type="entry name" value="Glutamine Phosphoribosylpyrophosphate, subunit 1, domain 1"/>
    <property type="match status" value="1"/>
</dbReference>
<dbReference type="InterPro" id="IPR029055">
    <property type="entry name" value="Ntn_hydrolases_N"/>
</dbReference>
<dbReference type="InterPro" id="IPR050115">
    <property type="entry name" value="Proteasome_alpha"/>
</dbReference>
<dbReference type="InterPro" id="IPR035206">
    <property type="entry name" value="Proteasome_beta2"/>
</dbReference>
<dbReference type="InterPro" id="IPR016050">
    <property type="entry name" value="Proteasome_bsu_CS"/>
</dbReference>
<dbReference type="InterPro" id="IPR001353">
    <property type="entry name" value="Proteasome_sua/b"/>
</dbReference>
<dbReference type="InterPro" id="IPR023333">
    <property type="entry name" value="Proteasome_suB-type"/>
</dbReference>
<dbReference type="PANTHER" id="PTHR11599">
    <property type="entry name" value="PROTEASOME SUBUNIT ALPHA/BETA"/>
    <property type="match status" value="1"/>
</dbReference>
<dbReference type="Pfam" id="PF00227">
    <property type="entry name" value="Proteasome"/>
    <property type="match status" value="1"/>
</dbReference>
<dbReference type="SUPFAM" id="SSF56235">
    <property type="entry name" value="N-terminal nucleophile aminohydrolases (Ntn hydrolases)"/>
    <property type="match status" value="1"/>
</dbReference>
<dbReference type="PROSITE" id="PS00854">
    <property type="entry name" value="PROTEASOME_BETA_1"/>
    <property type="match status" value="1"/>
</dbReference>
<dbReference type="PROSITE" id="PS51476">
    <property type="entry name" value="PROTEASOME_BETA_2"/>
    <property type="match status" value="1"/>
</dbReference>
<proteinExistence type="evidence at protein level"/>
<evidence type="ECO:0000250" key="1"/>
<evidence type="ECO:0000255" key="2">
    <source>
        <dbReference type="PROSITE-ProRule" id="PRU00809"/>
    </source>
</evidence>
<evidence type="ECO:0000269" key="3">
    <source>
    </source>
</evidence>
<evidence type="ECO:0000269" key="4">
    <source>
    </source>
</evidence>
<evidence type="ECO:0000269" key="5">
    <source>
    </source>
</evidence>
<evidence type="ECO:0000269" key="6">
    <source>
    </source>
</evidence>
<comment type="function">
    <text>Non-catalytic component of the proteasome, a multicatalytic proteinase complex which is characterized by its ability to cleave peptides with Arg, Phe, Tyr, Leu, and Glu adjacent to the leaving group at neutral or slightly basic pH. The proteasome has an ATP-dependent proteolytic activity.</text>
</comment>
<comment type="subunit">
    <text evidence="3 4 5">Component of the 20S core complex of the 26S proteasome. The 26S proteasome is composed of a core protease (CP), known as the 20S proteasome, capped at one or both ends by the 19S regulatory particle (RP/PA700). The 20S proteasome core is composed of 28 subunits that are arranged in four stacked rings, resulting in a barrel-shaped structure. The two end rings are each formed by seven alpha subunits, and the two central rings are each formed by seven beta subunits. The catalytic chamber with the active sites is on the inside of the barrel.</text>
</comment>
<comment type="subcellular location">
    <subcellularLocation>
        <location evidence="2">Cytoplasm</location>
    </subcellularLocation>
    <subcellularLocation>
        <location evidence="1">Nucleus</location>
    </subcellularLocation>
</comment>
<comment type="alternative products">
    <event type="alternative splicing"/>
    <isoform>
        <id>O24633-1</id>
        <name>1</name>
        <sequence type="displayed"/>
    </isoform>
    <text>A number of isoforms are produced. According to EST sequences.</text>
</comment>
<comment type="tissue specificity">
    <text evidence="6">Ubiquitous low levels, higher expression in siliques and flowers.</text>
</comment>
<comment type="similarity">
    <text evidence="2">Belongs to the peptidase T1B family.</text>
</comment>
<accession>O24633</accession>
<accession>Q2HIJ3</accession>